<name>Y045_MYCPA</name>
<feature type="chain" id="PRO_0000258842" description="UPF0301 protein MAP_0045">
    <location>
        <begin position="1"/>
        <end position="201"/>
    </location>
</feature>
<sequence>MPPPEDPEDYVAPAAQRVRAGTLLLANTDLLEPTFRRSVIYIVEHNDGGTLGVVLNRPSDTAVYNVLPQWTTLAAKPKTMFIGGPVKRDAALCLATLRVGADPQGAPGLRHVDGRVVMVDLDADPDAIAPLVEGVRIFAGYSGWTIGQLEGEIERDDWIVLSALPSDVLVGPRSDLWGQVLRRQPLPLSLLATHPIDISRN</sequence>
<reference key="1">
    <citation type="journal article" date="2005" name="Proc. Natl. Acad. Sci. U.S.A.">
        <title>The complete genome sequence of Mycobacterium avium subspecies paratuberculosis.</title>
        <authorList>
            <person name="Li L."/>
            <person name="Bannantine J.P."/>
            <person name="Zhang Q."/>
            <person name="Amonsin A."/>
            <person name="May B.J."/>
            <person name="Alt D."/>
            <person name="Banerji N."/>
            <person name="Kanjilal S."/>
            <person name="Kapur V."/>
        </authorList>
    </citation>
    <scope>NUCLEOTIDE SEQUENCE [LARGE SCALE GENOMIC DNA]</scope>
    <source>
        <strain>ATCC BAA-968 / K-10</strain>
    </source>
</reference>
<evidence type="ECO:0000255" key="1">
    <source>
        <dbReference type="HAMAP-Rule" id="MF_00758"/>
    </source>
</evidence>
<protein>
    <recommendedName>
        <fullName evidence="1">UPF0301 protein MAP_0045</fullName>
    </recommendedName>
</protein>
<gene>
    <name type="ordered locus">MAP_0045</name>
</gene>
<dbReference type="EMBL" id="AE016958">
    <property type="protein sequence ID" value="AAS02362.1"/>
    <property type="molecule type" value="Genomic_DNA"/>
</dbReference>
<dbReference type="RefSeq" id="WP_003874756.1">
    <property type="nucleotide sequence ID" value="NZ_CP106873.1"/>
</dbReference>
<dbReference type="SMR" id="Q744T3"/>
<dbReference type="STRING" id="262316.MAP_0045"/>
<dbReference type="KEGG" id="mpa:MAP_0045"/>
<dbReference type="eggNOG" id="COG1678">
    <property type="taxonomic scope" value="Bacteria"/>
</dbReference>
<dbReference type="HOGENOM" id="CLU_057596_2_0_11"/>
<dbReference type="Proteomes" id="UP000000580">
    <property type="component" value="Chromosome"/>
</dbReference>
<dbReference type="GO" id="GO:0005829">
    <property type="term" value="C:cytosol"/>
    <property type="evidence" value="ECO:0007669"/>
    <property type="project" value="TreeGrafter"/>
</dbReference>
<dbReference type="Gene3D" id="3.40.1740.10">
    <property type="entry name" value="VC0467-like"/>
    <property type="match status" value="1"/>
</dbReference>
<dbReference type="HAMAP" id="MF_00758">
    <property type="entry name" value="UPF0301"/>
    <property type="match status" value="1"/>
</dbReference>
<dbReference type="InterPro" id="IPR003774">
    <property type="entry name" value="AlgH-like"/>
</dbReference>
<dbReference type="NCBIfam" id="NF001269">
    <property type="entry name" value="PRK00228.2-1"/>
    <property type="match status" value="1"/>
</dbReference>
<dbReference type="NCBIfam" id="NF001272">
    <property type="entry name" value="PRK00228.2-4"/>
    <property type="match status" value="1"/>
</dbReference>
<dbReference type="PANTHER" id="PTHR30327">
    <property type="entry name" value="UNCHARACTERIZED PROTEIN YQGE"/>
    <property type="match status" value="1"/>
</dbReference>
<dbReference type="PANTHER" id="PTHR30327:SF1">
    <property type="entry name" value="UPF0301 PROTEIN YQGE"/>
    <property type="match status" value="1"/>
</dbReference>
<dbReference type="Pfam" id="PF02622">
    <property type="entry name" value="DUF179"/>
    <property type="match status" value="1"/>
</dbReference>
<dbReference type="SUPFAM" id="SSF143456">
    <property type="entry name" value="VC0467-like"/>
    <property type="match status" value="1"/>
</dbReference>
<accession>Q744T3</accession>
<keyword id="KW-1185">Reference proteome</keyword>
<proteinExistence type="inferred from homology"/>
<comment type="similarity">
    <text evidence="1">Belongs to the UPF0301 (AlgH) family.</text>
</comment>
<organism>
    <name type="scientific">Mycolicibacterium paratuberculosis (strain ATCC BAA-968 / K-10)</name>
    <name type="common">Mycobacterium paratuberculosis</name>
    <dbReference type="NCBI Taxonomy" id="262316"/>
    <lineage>
        <taxon>Bacteria</taxon>
        <taxon>Bacillati</taxon>
        <taxon>Actinomycetota</taxon>
        <taxon>Actinomycetes</taxon>
        <taxon>Mycobacteriales</taxon>
        <taxon>Mycobacteriaceae</taxon>
        <taxon>Mycobacterium</taxon>
        <taxon>Mycobacterium avium complex (MAC)</taxon>
    </lineage>
</organism>